<proteinExistence type="inferred from homology"/>
<sequence>MLMRTATPLDQPRAIGSARVSSKRVNGGSGIDGLRQSGALKLLFPTSRDIVQATLINTAGGVTGGDRFDIDGCAGAGSRLTITTQAAERAYGAQIGQTGEIKTNLKAEAGSRLFWLPQETILYKDAAIDRQLGVDLSTGAEFLMVEPVLFGRRAMGEDVSTLAFRDRIDIRRDGAPIYLDAIHLQGDVATHLDRPAIADGARAMASLVWVSAEAEGRIDALRRIIGRSGGVSMLHPDVLVMRLLAADGYILRRSLIPVLDLITDDTLPQSWRL</sequence>
<reference key="1">
    <citation type="journal article" date="2007" name="J. Bacteriol.">
        <title>The complete genome sequence of Roseobacter denitrificans reveals a mixotrophic rather than photosynthetic metabolism.</title>
        <authorList>
            <person name="Swingley W.D."/>
            <person name="Sadekar S."/>
            <person name="Mastrian S.D."/>
            <person name="Matthies H.J."/>
            <person name="Hao J."/>
            <person name="Ramos H."/>
            <person name="Acharya C.R."/>
            <person name="Conrad A.L."/>
            <person name="Taylor H.L."/>
            <person name="Dejesa L.C."/>
            <person name="Shah M.K."/>
            <person name="O'Huallachain M.E."/>
            <person name="Lince M.T."/>
            <person name="Blankenship R.E."/>
            <person name="Beatty J.T."/>
            <person name="Touchman J.W."/>
        </authorList>
    </citation>
    <scope>NUCLEOTIDE SEQUENCE [LARGE SCALE GENOMIC DNA]</scope>
    <source>
        <strain>ATCC 33942 / OCh 114</strain>
    </source>
</reference>
<gene>
    <name evidence="1" type="primary">ureD</name>
    <name type="ordered locus">RD1_3792</name>
</gene>
<comment type="function">
    <text evidence="1">Required for maturation of urease via the functional incorporation of the urease nickel metallocenter.</text>
</comment>
<comment type="subunit">
    <text evidence="1">UreD, UreF and UreG form a complex that acts as a GTP-hydrolysis-dependent molecular chaperone, activating the urease apoprotein by helping to assemble the nickel containing metallocenter of UreC. The UreE protein probably delivers the nickel.</text>
</comment>
<comment type="subcellular location">
    <subcellularLocation>
        <location evidence="1">Cytoplasm</location>
    </subcellularLocation>
</comment>
<comment type="similarity">
    <text evidence="1">Belongs to the UreD family.</text>
</comment>
<organism>
    <name type="scientific">Roseobacter denitrificans (strain ATCC 33942 / OCh 114)</name>
    <name type="common">Erythrobacter sp. (strain OCh 114)</name>
    <name type="synonym">Roseobacter denitrificans</name>
    <dbReference type="NCBI Taxonomy" id="375451"/>
    <lineage>
        <taxon>Bacteria</taxon>
        <taxon>Pseudomonadati</taxon>
        <taxon>Pseudomonadota</taxon>
        <taxon>Alphaproteobacteria</taxon>
        <taxon>Rhodobacterales</taxon>
        <taxon>Roseobacteraceae</taxon>
        <taxon>Roseobacter</taxon>
    </lineage>
</organism>
<keyword id="KW-0143">Chaperone</keyword>
<keyword id="KW-0963">Cytoplasm</keyword>
<keyword id="KW-0996">Nickel insertion</keyword>
<keyword id="KW-1185">Reference proteome</keyword>
<protein>
    <recommendedName>
        <fullName evidence="1">Urease accessory protein UreD</fullName>
    </recommendedName>
</protein>
<accession>Q161T3</accession>
<evidence type="ECO:0000255" key="1">
    <source>
        <dbReference type="HAMAP-Rule" id="MF_01384"/>
    </source>
</evidence>
<evidence type="ECO:0000256" key="2">
    <source>
        <dbReference type="SAM" id="MobiDB-lite"/>
    </source>
</evidence>
<dbReference type="EMBL" id="CP000362">
    <property type="protein sequence ID" value="ABG33260.1"/>
    <property type="molecule type" value="Genomic_DNA"/>
</dbReference>
<dbReference type="SMR" id="Q161T3"/>
<dbReference type="STRING" id="375451.RD1_3792"/>
<dbReference type="KEGG" id="rde:RD1_3792"/>
<dbReference type="eggNOG" id="COG0829">
    <property type="taxonomic scope" value="Bacteria"/>
</dbReference>
<dbReference type="HOGENOM" id="CLU_056339_2_0_5"/>
<dbReference type="OrthoDB" id="9798842at2"/>
<dbReference type="Proteomes" id="UP000007029">
    <property type="component" value="Chromosome"/>
</dbReference>
<dbReference type="GO" id="GO:0005737">
    <property type="term" value="C:cytoplasm"/>
    <property type="evidence" value="ECO:0007669"/>
    <property type="project" value="UniProtKB-SubCell"/>
</dbReference>
<dbReference type="GO" id="GO:0016151">
    <property type="term" value="F:nickel cation binding"/>
    <property type="evidence" value="ECO:0007669"/>
    <property type="project" value="UniProtKB-UniRule"/>
</dbReference>
<dbReference type="HAMAP" id="MF_01384">
    <property type="entry name" value="UreD"/>
    <property type="match status" value="1"/>
</dbReference>
<dbReference type="InterPro" id="IPR002669">
    <property type="entry name" value="UreD"/>
</dbReference>
<dbReference type="PANTHER" id="PTHR33643">
    <property type="entry name" value="UREASE ACCESSORY PROTEIN D"/>
    <property type="match status" value="1"/>
</dbReference>
<dbReference type="PANTHER" id="PTHR33643:SF1">
    <property type="entry name" value="UREASE ACCESSORY PROTEIN D"/>
    <property type="match status" value="1"/>
</dbReference>
<dbReference type="Pfam" id="PF01774">
    <property type="entry name" value="UreD"/>
    <property type="match status" value="1"/>
</dbReference>
<name>URED_ROSDO</name>
<feature type="chain" id="PRO_0000340514" description="Urease accessory protein UreD">
    <location>
        <begin position="1"/>
        <end position="273"/>
    </location>
</feature>
<feature type="region of interest" description="Disordered" evidence="2">
    <location>
        <begin position="1"/>
        <end position="29"/>
    </location>
</feature>